<keyword id="KW-0963">Cytoplasm</keyword>
<keyword id="KW-0460">Magnesium</keyword>
<keyword id="KW-0479">Metal-binding</keyword>
<keyword id="KW-0548">Nucleotidyltransferase</keyword>
<keyword id="KW-0694">RNA-binding</keyword>
<keyword id="KW-0808">Transferase</keyword>
<name>PNP_METEP</name>
<dbReference type="EC" id="2.7.7.8" evidence="1"/>
<dbReference type="EMBL" id="CP000908">
    <property type="protein sequence ID" value="ABY32397.1"/>
    <property type="status" value="ALT_INIT"/>
    <property type="molecule type" value="Genomic_DNA"/>
</dbReference>
<dbReference type="RefSeq" id="WP_003597551.1">
    <property type="nucleotide sequence ID" value="NC_010172.1"/>
</dbReference>
<dbReference type="SMR" id="A9W8P8"/>
<dbReference type="KEGG" id="mex:Mext_4027"/>
<dbReference type="eggNOG" id="COG1185">
    <property type="taxonomic scope" value="Bacteria"/>
</dbReference>
<dbReference type="HOGENOM" id="CLU_004217_2_2_5"/>
<dbReference type="BioCyc" id="MEXT419610:MEXT_RS20225-MONOMER"/>
<dbReference type="GO" id="GO:0005829">
    <property type="term" value="C:cytosol"/>
    <property type="evidence" value="ECO:0007669"/>
    <property type="project" value="TreeGrafter"/>
</dbReference>
<dbReference type="GO" id="GO:0000175">
    <property type="term" value="F:3'-5'-RNA exonuclease activity"/>
    <property type="evidence" value="ECO:0007669"/>
    <property type="project" value="TreeGrafter"/>
</dbReference>
<dbReference type="GO" id="GO:0000287">
    <property type="term" value="F:magnesium ion binding"/>
    <property type="evidence" value="ECO:0007669"/>
    <property type="project" value="UniProtKB-UniRule"/>
</dbReference>
<dbReference type="GO" id="GO:0004654">
    <property type="term" value="F:polyribonucleotide nucleotidyltransferase activity"/>
    <property type="evidence" value="ECO:0007669"/>
    <property type="project" value="UniProtKB-UniRule"/>
</dbReference>
<dbReference type="GO" id="GO:0003723">
    <property type="term" value="F:RNA binding"/>
    <property type="evidence" value="ECO:0007669"/>
    <property type="project" value="UniProtKB-UniRule"/>
</dbReference>
<dbReference type="GO" id="GO:0006402">
    <property type="term" value="P:mRNA catabolic process"/>
    <property type="evidence" value="ECO:0007669"/>
    <property type="project" value="UniProtKB-UniRule"/>
</dbReference>
<dbReference type="GO" id="GO:0006396">
    <property type="term" value="P:RNA processing"/>
    <property type="evidence" value="ECO:0007669"/>
    <property type="project" value="InterPro"/>
</dbReference>
<dbReference type="CDD" id="cd02393">
    <property type="entry name" value="KH-I_PNPase"/>
    <property type="match status" value="1"/>
</dbReference>
<dbReference type="CDD" id="cd11363">
    <property type="entry name" value="RNase_PH_PNPase_1"/>
    <property type="match status" value="1"/>
</dbReference>
<dbReference type="CDD" id="cd11364">
    <property type="entry name" value="RNase_PH_PNPase_2"/>
    <property type="match status" value="1"/>
</dbReference>
<dbReference type="CDD" id="cd04472">
    <property type="entry name" value="S1_PNPase"/>
    <property type="match status" value="1"/>
</dbReference>
<dbReference type="FunFam" id="2.40.50.140:FF:000107">
    <property type="entry name" value="Polyribonucleotide nucleotidyltransferase"/>
    <property type="match status" value="1"/>
</dbReference>
<dbReference type="FunFam" id="3.30.1370.10:FF:000001">
    <property type="entry name" value="Polyribonucleotide nucleotidyltransferase"/>
    <property type="match status" value="1"/>
</dbReference>
<dbReference type="FunFam" id="3.30.230.70:FF:000001">
    <property type="entry name" value="Polyribonucleotide nucleotidyltransferase"/>
    <property type="match status" value="1"/>
</dbReference>
<dbReference type="FunFam" id="3.30.230.70:FF:000002">
    <property type="entry name" value="Polyribonucleotide nucleotidyltransferase"/>
    <property type="match status" value="1"/>
</dbReference>
<dbReference type="Gene3D" id="3.30.230.70">
    <property type="entry name" value="GHMP Kinase, N-terminal domain"/>
    <property type="match status" value="2"/>
</dbReference>
<dbReference type="Gene3D" id="3.30.1370.10">
    <property type="entry name" value="K Homology domain, type 1"/>
    <property type="match status" value="1"/>
</dbReference>
<dbReference type="Gene3D" id="2.40.50.140">
    <property type="entry name" value="Nucleic acid-binding proteins"/>
    <property type="match status" value="1"/>
</dbReference>
<dbReference type="HAMAP" id="MF_01595">
    <property type="entry name" value="PNPase"/>
    <property type="match status" value="1"/>
</dbReference>
<dbReference type="InterPro" id="IPR001247">
    <property type="entry name" value="ExoRNase_PH_dom1"/>
</dbReference>
<dbReference type="InterPro" id="IPR015847">
    <property type="entry name" value="ExoRNase_PH_dom2"/>
</dbReference>
<dbReference type="InterPro" id="IPR036345">
    <property type="entry name" value="ExoRNase_PH_dom2_sf"/>
</dbReference>
<dbReference type="InterPro" id="IPR004087">
    <property type="entry name" value="KH_dom"/>
</dbReference>
<dbReference type="InterPro" id="IPR004088">
    <property type="entry name" value="KH_dom_type_1"/>
</dbReference>
<dbReference type="InterPro" id="IPR036612">
    <property type="entry name" value="KH_dom_type_1_sf"/>
</dbReference>
<dbReference type="InterPro" id="IPR012340">
    <property type="entry name" value="NA-bd_OB-fold"/>
</dbReference>
<dbReference type="InterPro" id="IPR012162">
    <property type="entry name" value="PNPase"/>
</dbReference>
<dbReference type="InterPro" id="IPR027408">
    <property type="entry name" value="PNPase/RNase_PH_dom_sf"/>
</dbReference>
<dbReference type="InterPro" id="IPR015848">
    <property type="entry name" value="PNPase_PH_RNA-bd_bac/org-type"/>
</dbReference>
<dbReference type="InterPro" id="IPR020568">
    <property type="entry name" value="Ribosomal_Su5_D2-typ_SF"/>
</dbReference>
<dbReference type="InterPro" id="IPR003029">
    <property type="entry name" value="S1_domain"/>
</dbReference>
<dbReference type="NCBIfam" id="TIGR03591">
    <property type="entry name" value="polynuc_phos"/>
    <property type="match status" value="1"/>
</dbReference>
<dbReference type="NCBIfam" id="NF008805">
    <property type="entry name" value="PRK11824.1"/>
    <property type="match status" value="1"/>
</dbReference>
<dbReference type="PANTHER" id="PTHR11252">
    <property type="entry name" value="POLYRIBONUCLEOTIDE NUCLEOTIDYLTRANSFERASE"/>
    <property type="match status" value="1"/>
</dbReference>
<dbReference type="PANTHER" id="PTHR11252:SF0">
    <property type="entry name" value="POLYRIBONUCLEOTIDE NUCLEOTIDYLTRANSFERASE 1, MITOCHONDRIAL"/>
    <property type="match status" value="1"/>
</dbReference>
<dbReference type="Pfam" id="PF00013">
    <property type="entry name" value="KH_1"/>
    <property type="match status" value="1"/>
</dbReference>
<dbReference type="Pfam" id="PF03726">
    <property type="entry name" value="PNPase"/>
    <property type="match status" value="1"/>
</dbReference>
<dbReference type="Pfam" id="PF01138">
    <property type="entry name" value="RNase_PH"/>
    <property type="match status" value="2"/>
</dbReference>
<dbReference type="Pfam" id="PF03725">
    <property type="entry name" value="RNase_PH_C"/>
    <property type="match status" value="2"/>
</dbReference>
<dbReference type="Pfam" id="PF00575">
    <property type="entry name" value="S1"/>
    <property type="match status" value="1"/>
</dbReference>
<dbReference type="PIRSF" id="PIRSF005499">
    <property type="entry name" value="PNPase"/>
    <property type="match status" value="1"/>
</dbReference>
<dbReference type="SMART" id="SM00322">
    <property type="entry name" value="KH"/>
    <property type="match status" value="1"/>
</dbReference>
<dbReference type="SMART" id="SM00316">
    <property type="entry name" value="S1"/>
    <property type="match status" value="1"/>
</dbReference>
<dbReference type="SUPFAM" id="SSF54791">
    <property type="entry name" value="Eukaryotic type KH-domain (KH-domain type I)"/>
    <property type="match status" value="1"/>
</dbReference>
<dbReference type="SUPFAM" id="SSF50249">
    <property type="entry name" value="Nucleic acid-binding proteins"/>
    <property type="match status" value="1"/>
</dbReference>
<dbReference type="SUPFAM" id="SSF55666">
    <property type="entry name" value="Ribonuclease PH domain 2-like"/>
    <property type="match status" value="2"/>
</dbReference>
<dbReference type="SUPFAM" id="SSF54211">
    <property type="entry name" value="Ribosomal protein S5 domain 2-like"/>
    <property type="match status" value="2"/>
</dbReference>
<dbReference type="PROSITE" id="PS50084">
    <property type="entry name" value="KH_TYPE_1"/>
    <property type="match status" value="1"/>
</dbReference>
<dbReference type="PROSITE" id="PS50126">
    <property type="entry name" value="S1"/>
    <property type="match status" value="1"/>
</dbReference>
<proteinExistence type="inferred from homology"/>
<gene>
    <name evidence="1" type="primary">pnp</name>
    <name type="ordered locus">Mext_4027</name>
</gene>
<comment type="function">
    <text evidence="1">Involved in mRNA degradation. Catalyzes the phosphorolysis of single-stranded polyribonucleotides processively in the 3'- to 5'-direction.</text>
</comment>
<comment type="catalytic activity">
    <reaction evidence="1">
        <text>RNA(n+1) + phosphate = RNA(n) + a ribonucleoside 5'-diphosphate</text>
        <dbReference type="Rhea" id="RHEA:22096"/>
        <dbReference type="Rhea" id="RHEA-COMP:14527"/>
        <dbReference type="Rhea" id="RHEA-COMP:17342"/>
        <dbReference type="ChEBI" id="CHEBI:43474"/>
        <dbReference type="ChEBI" id="CHEBI:57930"/>
        <dbReference type="ChEBI" id="CHEBI:140395"/>
        <dbReference type="EC" id="2.7.7.8"/>
    </reaction>
</comment>
<comment type="cofactor">
    <cofactor evidence="1">
        <name>Mg(2+)</name>
        <dbReference type="ChEBI" id="CHEBI:18420"/>
    </cofactor>
</comment>
<comment type="subcellular location">
    <subcellularLocation>
        <location evidence="1">Cytoplasm</location>
    </subcellularLocation>
</comment>
<comment type="similarity">
    <text evidence="1">Belongs to the polyribonucleotide nucleotidyltransferase family.</text>
</comment>
<comment type="sequence caution" evidence="3">
    <conflict type="erroneous initiation">
        <sequence resource="EMBL-CDS" id="ABY32397"/>
    </conflict>
</comment>
<protein>
    <recommendedName>
        <fullName evidence="1">Polyribonucleotide nucleotidyltransferase</fullName>
        <ecNumber evidence="1">2.7.7.8</ecNumber>
    </recommendedName>
    <alternativeName>
        <fullName evidence="1">Polynucleotide phosphorylase</fullName>
        <shortName evidence="1">PNPase</shortName>
    </alternativeName>
</protein>
<accession>A9W8P8</accession>
<evidence type="ECO:0000255" key="1">
    <source>
        <dbReference type="HAMAP-Rule" id="MF_01595"/>
    </source>
</evidence>
<evidence type="ECO:0000256" key="2">
    <source>
        <dbReference type="SAM" id="MobiDB-lite"/>
    </source>
</evidence>
<evidence type="ECO:0000305" key="3"/>
<organism>
    <name type="scientific">Methylorubrum extorquens (strain PA1)</name>
    <name type="common">Methylobacterium extorquens</name>
    <dbReference type="NCBI Taxonomy" id="419610"/>
    <lineage>
        <taxon>Bacteria</taxon>
        <taxon>Pseudomonadati</taxon>
        <taxon>Pseudomonadota</taxon>
        <taxon>Alphaproteobacteria</taxon>
        <taxon>Hyphomicrobiales</taxon>
        <taxon>Methylobacteriaceae</taxon>
        <taxon>Methylorubrum</taxon>
    </lineage>
</organism>
<feature type="chain" id="PRO_0000381907" description="Polyribonucleotide nucleotidyltransferase">
    <location>
        <begin position="1"/>
        <end position="745"/>
    </location>
</feature>
<feature type="domain" description="KH" evidence="1">
    <location>
        <begin position="554"/>
        <end position="613"/>
    </location>
</feature>
<feature type="domain" description="S1 motif" evidence="1">
    <location>
        <begin position="623"/>
        <end position="691"/>
    </location>
</feature>
<feature type="region of interest" description="Disordered" evidence="2">
    <location>
        <begin position="695"/>
        <end position="745"/>
    </location>
</feature>
<feature type="compositionally biased region" description="Basic and acidic residues" evidence="2">
    <location>
        <begin position="701"/>
        <end position="745"/>
    </location>
</feature>
<feature type="binding site" evidence="1">
    <location>
        <position position="487"/>
    </location>
    <ligand>
        <name>Mg(2+)</name>
        <dbReference type="ChEBI" id="CHEBI:18420"/>
    </ligand>
</feature>
<feature type="binding site" evidence="1">
    <location>
        <position position="493"/>
    </location>
    <ligand>
        <name>Mg(2+)</name>
        <dbReference type="ChEBI" id="CHEBI:18420"/>
    </ligand>
</feature>
<reference key="1">
    <citation type="submission" date="2007-12" db="EMBL/GenBank/DDBJ databases">
        <title>Complete sequence of Methylobacterium extorquens PA1.</title>
        <authorList>
            <consortium name="US DOE Joint Genome Institute"/>
            <person name="Copeland A."/>
            <person name="Lucas S."/>
            <person name="Lapidus A."/>
            <person name="Barry K."/>
            <person name="Glavina del Rio T."/>
            <person name="Dalin E."/>
            <person name="Tice H."/>
            <person name="Pitluck S."/>
            <person name="Saunders E."/>
            <person name="Brettin T."/>
            <person name="Bruce D."/>
            <person name="Detter J.C."/>
            <person name="Han C."/>
            <person name="Schmutz J."/>
            <person name="Larimer F."/>
            <person name="Land M."/>
            <person name="Hauser L."/>
            <person name="Kyrpides N."/>
            <person name="Kim E."/>
            <person name="Marx C."/>
            <person name="Richardson P."/>
        </authorList>
    </citation>
    <scope>NUCLEOTIDE SEQUENCE [LARGE SCALE GENOMIC DNA]</scope>
    <source>
        <strain>PA1</strain>
    </source>
</reference>
<sequence>MFDVQREELIWGDRKLVLETGKTARQADGSVVATYGETTVLATVVAGKEPKAGIDFLPLTVNYQERAYAAGRIPGGYFKREGRPSEKETLVSRLIDRPIRPLFVEGWRNDTQVVVTVLSHDLENDPDIVAMVAASAALTLSGVPFMGPIGAARVGYLNGGYKLNPLVTEIAESTLDLVVAGTQDAVLMVESEAKELSEDVMLGAVMFGHKHFQPVIEAIIRLAEKAAKEPRDFTPPENADVEAAVLAVAETELREAYKKTVKQERYAAVDAVKAKVVAALCPAEGEQKFSPEKVKAAFKEAQSKVVRWNILDTGSRIDGRDVKTVRSIVSEVGVLPRAHGSSLFTRGETQALVVATLGTGEDEQFIDALEGTYKERFLLHYNFPPYSVGETGRMGSPGRREIGHGKLAWRAIRPVLPPAHEFPYTIRVVSEITESNGSSSMASVCGGSLSLMDAGVPLRRPVAGIAMGLILEGERFAVLSDILGDEDHLGDMDFKVAGSEEGITSLQMDIKIAGITEEIMKIALAQAKDGRAHILGEMSKALTAARPELGEYAPRIETMQIPTDKIRDVIGTGGKIIREIVEKTGAKINIEDTGIVKIASSDGKAIKAAYNWIRSIVAEPEAGTIYDGTIVKIMEFGAFVNFFGAKDGLVHISELAAQRVAKVGDVVKEGQKVKVKFLGADERGKIRLSMKVVDQETGEDLTEKLKAERAERGEPEREERSDRGDRGDRGPRRDRGERRRESSGE</sequence>